<gene>
    <name type="primary">GPI18</name>
    <name type="ordered locus">YBR004C</name>
    <name type="ORF">YBR0110</name>
</gene>
<protein>
    <recommendedName>
        <fullName>GPI mannosyltransferase 2</fullName>
        <ecNumber>2.4.1.-</ecNumber>
    </recommendedName>
    <alternativeName>
        <fullName>GPI mannosyltransferase II</fullName>
        <shortName>GPI-MT-II</shortName>
    </alternativeName>
    <alternativeName>
        <fullName>Glycosylphosphatidylinositol-anchor biosynthesis protein 18</fullName>
    </alternativeName>
</protein>
<dbReference type="EC" id="2.4.1.-"/>
<dbReference type="EMBL" id="Z35873">
    <property type="protein sequence ID" value="CAA84940.1"/>
    <property type="molecule type" value="Genomic_DNA"/>
</dbReference>
<dbReference type="EMBL" id="Z35874">
    <property type="protein sequence ID" value="CAA84942.1"/>
    <property type="molecule type" value="Genomic_DNA"/>
</dbReference>
<dbReference type="EMBL" id="BK006936">
    <property type="protein sequence ID" value="DAA07125.2"/>
    <property type="molecule type" value="Genomic_DNA"/>
</dbReference>
<dbReference type="PIR" id="S45856">
    <property type="entry name" value="S45856"/>
</dbReference>
<dbReference type="RefSeq" id="NP_009558.2">
    <property type="nucleotide sequence ID" value="NM_001178352.2"/>
</dbReference>
<dbReference type="BioGRID" id="32705">
    <property type="interactions" value="138"/>
</dbReference>
<dbReference type="ComplexPortal" id="CPX-1269">
    <property type="entry name" value="Glycosylphosphatidylinositol-mannosyltransferase II complex"/>
</dbReference>
<dbReference type="DIP" id="DIP-3954N"/>
<dbReference type="FunCoup" id="P38211">
    <property type="interactions" value="357"/>
</dbReference>
<dbReference type="IntAct" id="P38211">
    <property type="interactions" value="3"/>
</dbReference>
<dbReference type="MINT" id="P38211"/>
<dbReference type="STRING" id="4932.YBR004C"/>
<dbReference type="CAZy" id="GT76">
    <property type="family name" value="Glycosyltransferase Family 76"/>
</dbReference>
<dbReference type="GlyCosmos" id="P38211">
    <property type="glycosylation" value="2 sites, No reported glycans"/>
</dbReference>
<dbReference type="GlyGen" id="P38211">
    <property type="glycosylation" value="2 sites"/>
</dbReference>
<dbReference type="PaxDb" id="4932-YBR004C"/>
<dbReference type="PeptideAtlas" id="P38211"/>
<dbReference type="EnsemblFungi" id="YBR004C_mRNA">
    <property type="protein sequence ID" value="YBR004C"/>
    <property type="gene ID" value="YBR004C"/>
</dbReference>
<dbReference type="GeneID" id="852289"/>
<dbReference type="KEGG" id="sce:YBR004C"/>
<dbReference type="AGR" id="SGD:S000000208"/>
<dbReference type="SGD" id="S000000208">
    <property type="gene designation" value="GPI18"/>
</dbReference>
<dbReference type="VEuPathDB" id="FungiDB:YBR004C"/>
<dbReference type="eggNOG" id="KOG2647">
    <property type="taxonomic scope" value="Eukaryota"/>
</dbReference>
<dbReference type="GeneTree" id="ENSGT00390000013174"/>
<dbReference type="HOGENOM" id="CLU_029048_0_0_1"/>
<dbReference type="InParanoid" id="P38211"/>
<dbReference type="OMA" id="CEWTLPS"/>
<dbReference type="OrthoDB" id="10252502at2759"/>
<dbReference type="BioCyc" id="YEAST:G3O-28992-MONOMER"/>
<dbReference type="Reactome" id="R-SCE-162710">
    <property type="pathway name" value="Synthesis of glycosylphosphatidylinositol (GPI)"/>
</dbReference>
<dbReference type="UniPathway" id="UPA00196"/>
<dbReference type="BioGRID-ORCS" id="852289">
    <property type="hits" value="2 hits in 10 CRISPR screens"/>
</dbReference>
<dbReference type="PRO" id="PR:P38211"/>
<dbReference type="Proteomes" id="UP000002311">
    <property type="component" value="Chromosome II"/>
</dbReference>
<dbReference type="RNAct" id="P38211">
    <property type="molecule type" value="protein"/>
</dbReference>
<dbReference type="GO" id="GO:0005783">
    <property type="term" value="C:endoplasmic reticulum"/>
    <property type="evidence" value="ECO:0000314"/>
    <property type="project" value="SGD"/>
</dbReference>
<dbReference type="GO" id="GO:0005789">
    <property type="term" value="C:endoplasmic reticulum membrane"/>
    <property type="evidence" value="ECO:0000314"/>
    <property type="project" value="ComplexPortal"/>
</dbReference>
<dbReference type="GO" id="GO:0120097">
    <property type="term" value="C:glycosylphosphatidylinositol-mannosyltransferase II complex"/>
    <property type="evidence" value="ECO:0000353"/>
    <property type="project" value="ComplexPortal"/>
</dbReference>
<dbReference type="GO" id="GO:0031501">
    <property type="term" value="C:mannosyltransferase complex"/>
    <property type="evidence" value="ECO:0000316"/>
    <property type="project" value="SGD"/>
</dbReference>
<dbReference type="GO" id="GO:0005739">
    <property type="term" value="C:mitochondrion"/>
    <property type="evidence" value="ECO:0007005"/>
    <property type="project" value="SGD"/>
</dbReference>
<dbReference type="GO" id="GO:0000009">
    <property type="term" value="F:alpha-1,6-mannosyltransferase activity"/>
    <property type="evidence" value="ECO:0000315"/>
    <property type="project" value="SGD"/>
</dbReference>
<dbReference type="GO" id="GO:0004376">
    <property type="term" value="F:glycolipid mannosyltransferase activity"/>
    <property type="evidence" value="ECO:0007669"/>
    <property type="project" value="InterPro"/>
</dbReference>
<dbReference type="GO" id="GO:0000030">
    <property type="term" value="F:mannosyltransferase activity"/>
    <property type="evidence" value="ECO:0000315"/>
    <property type="project" value="SGD"/>
</dbReference>
<dbReference type="GO" id="GO:0031505">
    <property type="term" value="P:fungal-type cell wall organization"/>
    <property type="evidence" value="ECO:0000303"/>
    <property type="project" value="ComplexPortal"/>
</dbReference>
<dbReference type="GO" id="GO:0006506">
    <property type="term" value="P:GPI anchor biosynthetic process"/>
    <property type="evidence" value="ECO:0000315"/>
    <property type="project" value="SGD"/>
</dbReference>
<dbReference type="GO" id="GO:0035268">
    <property type="term" value="P:protein mannosylation"/>
    <property type="evidence" value="ECO:0000303"/>
    <property type="project" value="ComplexPortal"/>
</dbReference>
<dbReference type="InterPro" id="IPR007315">
    <property type="entry name" value="PIG-V/Gpi18"/>
</dbReference>
<dbReference type="PANTHER" id="PTHR12468">
    <property type="entry name" value="GPI MANNOSYLTRANSFERASE 2"/>
    <property type="match status" value="1"/>
</dbReference>
<dbReference type="PANTHER" id="PTHR12468:SF2">
    <property type="entry name" value="GPI MANNOSYLTRANSFERASE 2"/>
    <property type="match status" value="1"/>
</dbReference>
<dbReference type="Pfam" id="PF04188">
    <property type="entry name" value="Mannosyl_trans2"/>
    <property type="match status" value="1"/>
</dbReference>
<accession>P38211</accession>
<accession>D6VQ05</accession>
<accession>P89496</accession>
<keyword id="KW-0256">Endoplasmic reticulum</keyword>
<keyword id="KW-0325">Glycoprotein</keyword>
<keyword id="KW-0328">Glycosyltransferase</keyword>
<keyword id="KW-0337">GPI-anchor biosynthesis</keyword>
<keyword id="KW-0472">Membrane</keyword>
<keyword id="KW-1185">Reference proteome</keyword>
<keyword id="KW-0808">Transferase</keyword>
<keyword id="KW-0812">Transmembrane</keyword>
<keyword id="KW-1133">Transmembrane helix</keyword>
<organism>
    <name type="scientific">Saccharomyces cerevisiae (strain ATCC 204508 / S288c)</name>
    <name type="common">Baker's yeast</name>
    <dbReference type="NCBI Taxonomy" id="559292"/>
    <lineage>
        <taxon>Eukaryota</taxon>
        <taxon>Fungi</taxon>
        <taxon>Dikarya</taxon>
        <taxon>Ascomycota</taxon>
        <taxon>Saccharomycotina</taxon>
        <taxon>Saccharomycetes</taxon>
        <taxon>Saccharomycetales</taxon>
        <taxon>Saccharomycetaceae</taxon>
        <taxon>Saccharomyces</taxon>
    </lineage>
</organism>
<feature type="chain" id="PRO_0000014309" description="GPI mannosyltransferase 2">
    <location>
        <begin position="1"/>
        <end position="433"/>
    </location>
</feature>
<feature type="topological domain" description="Cytoplasmic" evidence="1">
    <location>
        <position position="1"/>
    </location>
</feature>
<feature type="transmembrane region" description="Helical" evidence="1">
    <location>
        <begin position="2"/>
        <end position="22"/>
    </location>
</feature>
<feature type="topological domain" description="Lumenal" evidence="1">
    <location>
        <begin position="23"/>
        <end position="109"/>
    </location>
</feature>
<feature type="transmembrane region" description="Helical" evidence="1">
    <location>
        <begin position="110"/>
        <end position="130"/>
    </location>
</feature>
<feature type="topological domain" description="Cytoplasmic" evidence="1">
    <location>
        <begin position="131"/>
        <end position="161"/>
    </location>
</feature>
<feature type="transmembrane region" description="Helical" evidence="1">
    <location>
        <begin position="162"/>
        <end position="182"/>
    </location>
</feature>
<feature type="topological domain" description="Lumenal" evidence="1">
    <location>
        <begin position="183"/>
        <end position="215"/>
    </location>
</feature>
<feature type="transmembrane region" description="Helical" evidence="1">
    <location>
        <begin position="216"/>
        <end position="236"/>
    </location>
</feature>
<feature type="topological domain" description="Cytoplasmic" evidence="1">
    <location>
        <begin position="237"/>
        <end position="243"/>
    </location>
</feature>
<feature type="transmembrane region" description="Helical" evidence="1">
    <location>
        <begin position="244"/>
        <end position="264"/>
    </location>
</feature>
<feature type="topological domain" description="Lumenal" evidence="1">
    <location>
        <begin position="265"/>
        <end position="318"/>
    </location>
</feature>
<feature type="transmembrane region" description="Helical" evidence="1">
    <location>
        <begin position="319"/>
        <end position="339"/>
    </location>
</feature>
<feature type="topological domain" description="Cytoplasmic" evidence="1">
    <location>
        <begin position="340"/>
        <end position="350"/>
    </location>
</feature>
<feature type="transmembrane region" description="Helical" evidence="1">
    <location>
        <begin position="351"/>
        <end position="371"/>
    </location>
</feature>
<feature type="topological domain" description="Lumenal" evidence="1">
    <location>
        <begin position="372"/>
        <end position="409"/>
    </location>
</feature>
<feature type="transmembrane region" description="Helical" evidence="1">
    <location>
        <begin position="410"/>
        <end position="430"/>
    </location>
</feature>
<feature type="topological domain" description="Cytoplasmic" evidence="1">
    <location>
        <begin position="431"/>
        <end position="433"/>
    </location>
</feature>
<feature type="glycosylation site" description="N-linked (GlcNAc...) asparagine" evidence="1">
    <location>
        <position position="69"/>
    </location>
</feature>
<feature type="glycosylation site" description="N-linked (GlcNAc...) asparagine" evidence="1">
    <location>
        <position position="101"/>
    </location>
</feature>
<feature type="sequence conflict" description="In Ref. 1; CAA84940/CAA84942." evidence="5" ref="1">
    <original>S</original>
    <variation>T</variation>
    <location>
        <position position="187"/>
    </location>
</feature>
<comment type="function">
    <text evidence="2 3 4">Mannosyltransferase involved in glycosylphosphatidylinositol-anchor biosynthesis. Responsible for the transfer of the second mannose to the glycosylphosphatidylinositol during GPI precursor assembly.</text>
</comment>
<comment type="pathway">
    <text>Glycolipid biosynthesis; glycosylphosphatidylinositol-anchor biosynthesis.</text>
</comment>
<comment type="subunit">
    <text>Part of the GPI mannosyltransferase 2 complex composed of GPI18 and PGA1.</text>
</comment>
<comment type="subcellular location">
    <subcellularLocation>
        <location evidence="4">Endoplasmic reticulum membrane</location>
        <topology evidence="4">Multi-pass membrane protein</topology>
    </subcellularLocation>
</comment>
<comment type="similarity">
    <text evidence="5">Belongs to the PIGV family.</text>
</comment>
<name>GPI18_YEAST</name>
<proteinExistence type="evidence at protein level"/>
<sequence>MIVGLTLYFVLFRSIQYLLVFLTPIRQFDTSTSLLLNELCSSPSEINSYWNKYFWNKLLSWDSVFFIKNITSKNGKPQFEHEYAFSQLWTFFVRLFIKSNNDSIYHALRVGVAIENVLFYLSGIVLYFLTKKIFSQNIRQSQFARTIAKKTSLLFFLTSAAGFLTSIYSEPLSFFFAFVGIWSRECSISVPVLGQFDISWRYWFPYSFISMACFTLASLNRSNCVLLGIYFIFDLIELTKNRKFVKAICFPLLSGSLMFSALLYQQYYLPYKTFCPQRGEWCKSQLFSSIFITKTSLYSYIQSHYWGVGLLKYWTPNNIPNFLFAVPNIIILIYSSIYFSKIYPSYNLKALVWITRALVVIVCFFAHVQILNRIASFLPLHLWYLADRLVKTSDPKKMENPKGDDKIVKFYIYWLAFWIPLQTILFAAFLPPA</sequence>
<reference key="1">
    <citation type="journal article" date="1994" name="EMBO J.">
        <title>Complete DNA sequence of yeast chromosome II.</title>
        <authorList>
            <person name="Feldmann H."/>
            <person name="Aigle M."/>
            <person name="Aljinovic G."/>
            <person name="Andre B."/>
            <person name="Baclet M.C."/>
            <person name="Barthe C."/>
            <person name="Baur A."/>
            <person name="Becam A.-M."/>
            <person name="Biteau N."/>
            <person name="Boles E."/>
            <person name="Brandt T."/>
            <person name="Brendel M."/>
            <person name="Brueckner M."/>
            <person name="Bussereau F."/>
            <person name="Christiansen C."/>
            <person name="Contreras R."/>
            <person name="Crouzet M."/>
            <person name="Cziepluch C."/>
            <person name="Demolis N."/>
            <person name="Delaveau T."/>
            <person name="Doignon F."/>
            <person name="Domdey H."/>
            <person name="Duesterhus S."/>
            <person name="Dubois E."/>
            <person name="Dujon B."/>
            <person name="El Bakkoury M."/>
            <person name="Entian K.-D."/>
            <person name="Feuermann M."/>
            <person name="Fiers W."/>
            <person name="Fobo G.M."/>
            <person name="Fritz C."/>
            <person name="Gassenhuber J."/>
            <person name="Glansdorff N."/>
            <person name="Goffeau A."/>
            <person name="Grivell L.A."/>
            <person name="de Haan M."/>
            <person name="Hein C."/>
            <person name="Herbert C.J."/>
            <person name="Hollenberg C.P."/>
            <person name="Holmstroem K."/>
            <person name="Jacq C."/>
            <person name="Jacquet M."/>
            <person name="Jauniaux J.-C."/>
            <person name="Jonniaux J.-L."/>
            <person name="Kallesoee T."/>
            <person name="Kiesau P."/>
            <person name="Kirchrath L."/>
            <person name="Koetter P."/>
            <person name="Korol S."/>
            <person name="Liebl S."/>
            <person name="Logghe M."/>
            <person name="Lohan A.J.E."/>
            <person name="Louis E.J."/>
            <person name="Li Z.Y."/>
            <person name="Maat M.J."/>
            <person name="Mallet L."/>
            <person name="Mannhaupt G."/>
            <person name="Messenguy F."/>
            <person name="Miosga T."/>
            <person name="Molemans F."/>
            <person name="Mueller S."/>
            <person name="Nasr F."/>
            <person name="Obermaier B."/>
            <person name="Perea J."/>
            <person name="Pierard A."/>
            <person name="Piravandi E."/>
            <person name="Pohl F.M."/>
            <person name="Pohl T.M."/>
            <person name="Potier S."/>
            <person name="Proft M."/>
            <person name="Purnelle B."/>
            <person name="Ramezani Rad M."/>
            <person name="Rieger M."/>
            <person name="Rose M."/>
            <person name="Schaaff-Gerstenschlaeger I."/>
            <person name="Scherens B."/>
            <person name="Schwarzlose C."/>
            <person name="Skala J."/>
            <person name="Slonimski P.P."/>
            <person name="Smits P.H.M."/>
            <person name="Souciet J.-L."/>
            <person name="Steensma H.Y."/>
            <person name="Stucka R."/>
            <person name="Urrestarazu L.A."/>
            <person name="van der Aart Q.J.M."/>
            <person name="Van Dyck L."/>
            <person name="Vassarotti A."/>
            <person name="Vetter I."/>
            <person name="Vierendeels F."/>
            <person name="Vissers S."/>
            <person name="Wagner G."/>
            <person name="de Wergifosse P."/>
            <person name="Wolfe K.H."/>
            <person name="Zagulski M."/>
            <person name="Zimmermann F.K."/>
            <person name="Mewes H.-W."/>
            <person name="Kleine K."/>
        </authorList>
    </citation>
    <scope>NUCLEOTIDE SEQUENCE [LARGE SCALE GENOMIC DNA]</scope>
    <source>
        <strain>ATCC 204508 / S288c</strain>
    </source>
</reference>
<reference key="2">
    <citation type="journal article" date="2014" name="G3 (Bethesda)">
        <title>The reference genome sequence of Saccharomyces cerevisiae: Then and now.</title>
        <authorList>
            <person name="Engel S.R."/>
            <person name="Dietrich F.S."/>
            <person name="Fisk D.G."/>
            <person name="Binkley G."/>
            <person name="Balakrishnan R."/>
            <person name="Costanzo M.C."/>
            <person name="Dwight S.S."/>
            <person name="Hitz B.C."/>
            <person name="Karra K."/>
            <person name="Nash R.S."/>
            <person name="Weng S."/>
            <person name="Wong E.D."/>
            <person name="Lloyd P."/>
            <person name="Skrzypek M.S."/>
            <person name="Miyasato S.R."/>
            <person name="Simison M."/>
            <person name="Cherry J.M."/>
        </authorList>
    </citation>
    <scope>GENOME REANNOTATION</scope>
    <scope>SEQUENCE REVISION TO 187</scope>
    <source>
        <strain>ATCC 204508 / S288c</strain>
    </source>
</reference>
<reference key="3">
    <citation type="journal article" date="2005" name="FEBS J.">
        <title>Saccharomyces cerevisiae Ybr004c and its human homologue are required for addition of the second mannose during glycosylphosphatidylinositol precursor assembly.</title>
        <authorList>
            <person name="Fabre A.-L."/>
            <person name="Orlean P."/>
            <person name="Taron C.H."/>
        </authorList>
    </citation>
    <scope>FUNCTION</scope>
</reference>
<reference key="4">
    <citation type="journal article" date="2005" name="J. Biol. Chem.">
        <title>PIG-V involved in transferring the second mannose in glycosylphosphatidylinositol.</title>
        <authorList>
            <person name="Kang J.Y."/>
            <person name="Hong Y."/>
            <person name="Ashida H."/>
            <person name="Shishioh N."/>
            <person name="Murakami Y."/>
            <person name="Morita Y.S."/>
            <person name="Maeda Y."/>
            <person name="Kinoshita T."/>
        </authorList>
    </citation>
    <scope>FUNCTION</scope>
</reference>
<reference key="5">
    <citation type="journal article" date="2007" name="Mol. Biol. Cell">
        <title>Pga1 is an essential component of glycosylphosphatidylinositol-mannosyltransferase II of Saccharomyces cerevisiae.</title>
        <authorList>
            <person name="Sato K."/>
            <person name="Noda Y."/>
            <person name="Yoda K."/>
        </authorList>
    </citation>
    <scope>FUNCTION</scope>
    <scope>INTERACTION WITH PGA1</scope>
    <scope>SUBCELLULAR LOCATION</scope>
</reference>
<evidence type="ECO:0000255" key="1"/>
<evidence type="ECO:0000269" key="2">
    <source>
    </source>
</evidence>
<evidence type="ECO:0000269" key="3">
    <source>
    </source>
</evidence>
<evidence type="ECO:0000269" key="4">
    <source>
    </source>
</evidence>
<evidence type="ECO:0000305" key="5"/>